<proteinExistence type="evidence at protein level"/>
<name>SECU_YEAST</name>
<feature type="chain" id="PRO_0000206366" description="Securin">
    <location>
        <begin position="1"/>
        <end position="373"/>
    </location>
</feature>
<feature type="region of interest" description="Disordered" evidence="2">
    <location>
        <begin position="1"/>
        <end position="27"/>
    </location>
</feature>
<feature type="region of interest" description="Disordered" evidence="2">
    <location>
        <begin position="177"/>
        <end position="278"/>
    </location>
</feature>
<feature type="short sequence motif" description="D-box">
    <location>
        <begin position="85"/>
        <end position="88"/>
    </location>
</feature>
<feature type="compositionally biased region" description="Basic and acidic residues" evidence="2">
    <location>
        <begin position="1"/>
        <end position="10"/>
    </location>
</feature>
<feature type="compositionally biased region" description="Polar residues" evidence="2">
    <location>
        <begin position="12"/>
        <end position="26"/>
    </location>
</feature>
<feature type="compositionally biased region" description="Acidic residues" evidence="2">
    <location>
        <begin position="185"/>
        <end position="194"/>
    </location>
</feature>
<feature type="compositionally biased region" description="Low complexity" evidence="2">
    <location>
        <begin position="225"/>
        <end position="235"/>
    </location>
</feature>
<feature type="compositionally biased region" description="Basic and acidic residues" evidence="2">
    <location>
        <begin position="240"/>
        <end position="256"/>
    </location>
</feature>
<feature type="modified residue" description="Phosphoserine" evidence="9">
    <location>
        <position position="185"/>
    </location>
</feature>
<feature type="modified residue" description="Phosphoserine" evidence="9">
    <location>
        <position position="186"/>
    </location>
</feature>
<feature type="modified residue" description="Phosphoserine" evidence="9">
    <location>
        <position position="212"/>
    </location>
</feature>
<feature type="modified residue" description="Phosphoserine" evidence="9">
    <location>
        <position position="213"/>
    </location>
</feature>
<feature type="modified residue" description="Phosphoserine" evidence="8 10">
    <location>
        <position position="277"/>
    </location>
</feature>
<feature type="modified residue" description="Phosphoserine; by CDC28" evidence="8">
    <location>
        <position position="292"/>
    </location>
</feature>
<feature type="mutagenesis site" description="Abolishes ubiquitination and subsequent degradation." evidence="5">
    <original>RLPL</original>
    <variation>ALPA</variation>
    <location>
        <begin position="85"/>
        <end position="88"/>
    </location>
</feature>
<feature type="mutagenesis site" description="Affects phosphorylation and the interaction with ESP1." evidence="4">
    <original>S</original>
    <variation>A</variation>
    <location>
        <position position="277"/>
    </location>
</feature>
<feature type="mutagenesis site" description="Affects phosphorylation and the interaction with ESP1." evidence="4">
    <original>S</original>
    <variation>A</variation>
    <location>
        <position position="292"/>
    </location>
</feature>
<feature type="mutagenesis site" description="No effect." evidence="4">
    <original>T</original>
    <variation>A</variation>
    <location>
        <position position="304"/>
    </location>
</feature>
<feature type="helix" evidence="11">
    <location>
        <begin position="273"/>
        <end position="275"/>
    </location>
</feature>
<feature type="helix" evidence="11">
    <location>
        <begin position="281"/>
        <end position="288"/>
    </location>
</feature>
<feature type="helix" evidence="11">
    <location>
        <begin position="365"/>
        <end position="371"/>
    </location>
</feature>
<organism>
    <name type="scientific">Saccharomyces cerevisiae (strain ATCC 204508 / S288c)</name>
    <name type="common">Baker's yeast</name>
    <dbReference type="NCBI Taxonomy" id="559292"/>
    <lineage>
        <taxon>Eukaryota</taxon>
        <taxon>Fungi</taxon>
        <taxon>Dikarya</taxon>
        <taxon>Ascomycota</taxon>
        <taxon>Saccharomycotina</taxon>
        <taxon>Saccharomycetes</taxon>
        <taxon>Saccharomycetales</taxon>
        <taxon>Saccharomycetaceae</taxon>
        <taxon>Saccharomyces</taxon>
    </lineage>
</organism>
<reference key="1">
    <citation type="journal article" date="1996" name="J. Cell Biol.">
        <title>Pds1p, an inhibitor of anaphase in budding yeast, plays a critical role in the APC and checkpoint pathway(s).</title>
        <authorList>
            <person name="Yamamoto A."/>
            <person name="Guacci V."/>
            <person name="Koshland D."/>
        </authorList>
    </citation>
    <scope>NUCLEOTIDE SEQUENCE [GENOMIC DNA]</scope>
    <source>
        <strain>ATCC 204626 / S288c / A364A</strain>
    </source>
</reference>
<reference key="2">
    <citation type="journal article" date="1997" name="Nature">
        <title>The nucleotide sequence of Saccharomyces cerevisiae chromosome IV.</title>
        <authorList>
            <person name="Jacq C."/>
            <person name="Alt-Moerbe J."/>
            <person name="Andre B."/>
            <person name="Arnold W."/>
            <person name="Bahr A."/>
            <person name="Ballesta J.P.G."/>
            <person name="Bargues M."/>
            <person name="Baron L."/>
            <person name="Becker A."/>
            <person name="Biteau N."/>
            <person name="Bloecker H."/>
            <person name="Blugeon C."/>
            <person name="Boskovic J."/>
            <person name="Brandt P."/>
            <person name="Brueckner M."/>
            <person name="Buitrago M.J."/>
            <person name="Coster F."/>
            <person name="Delaveau T."/>
            <person name="del Rey F."/>
            <person name="Dujon B."/>
            <person name="Eide L.G."/>
            <person name="Garcia-Cantalejo J.M."/>
            <person name="Goffeau A."/>
            <person name="Gomez-Peris A."/>
            <person name="Granotier C."/>
            <person name="Hanemann V."/>
            <person name="Hankeln T."/>
            <person name="Hoheisel J.D."/>
            <person name="Jaeger W."/>
            <person name="Jimenez A."/>
            <person name="Jonniaux J.-L."/>
            <person name="Kraemer C."/>
            <person name="Kuester H."/>
            <person name="Laamanen P."/>
            <person name="Legros Y."/>
            <person name="Louis E.J."/>
            <person name="Moeller-Rieker S."/>
            <person name="Monnet A."/>
            <person name="Moro M."/>
            <person name="Mueller-Auer S."/>
            <person name="Nussbaumer B."/>
            <person name="Paricio N."/>
            <person name="Paulin L."/>
            <person name="Perea J."/>
            <person name="Perez-Alonso M."/>
            <person name="Perez-Ortin J.E."/>
            <person name="Pohl T.M."/>
            <person name="Prydz H."/>
            <person name="Purnelle B."/>
            <person name="Rasmussen S.W."/>
            <person name="Remacha M.A."/>
            <person name="Revuelta J.L."/>
            <person name="Rieger M."/>
            <person name="Salom D."/>
            <person name="Saluz H.P."/>
            <person name="Saiz J.E."/>
            <person name="Saren A.-M."/>
            <person name="Schaefer M."/>
            <person name="Scharfe M."/>
            <person name="Schmidt E.R."/>
            <person name="Schneider C."/>
            <person name="Scholler P."/>
            <person name="Schwarz S."/>
            <person name="Soler-Mira A."/>
            <person name="Urrestarazu L.A."/>
            <person name="Verhasselt P."/>
            <person name="Vissers S."/>
            <person name="Voet M."/>
            <person name="Volckaert G."/>
            <person name="Wagner G."/>
            <person name="Wambutt R."/>
            <person name="Wedler E."/>
            <person name="Wedler H."/>
            <person name="Woelfl S."/>
            <person name="Harris D.E."/>
            <person name="Bowman S."/>
            <person name="Brown D."/>
            <person name="Churcher C.M."/>
            <person name="Connor R."/>
            <person name="Dedman K."/>
            <person name="Gentles S."/>
            <person name="Hamlin N."/>
            <person name="Hunt S."/>
            <person name="Jones L."/>
            <person name="McDonald S."/>
            <person name="Murphy L.D."/>
            <person name="Niblett D."/>
            <person name="Odell C."/>
            <person name="Oliver K."/>
            <person name="Rajandream M.A."/>
            <person name="Richards C."/>
            <person name="Shore L."/>
            <person name="Walsh S.V."/>
            <person name="Barrell B.G."/>
            <person name="Dietrich F.S."/>
            <person name="Mulligan J.T."/>
            <person name="Allen E."/>
            <person name="Araujo R."/>
            <person name="Aviles E."/>
            <person name="Berno A."/>
            <person name="Carpenter J."/>
            <person name="Chen E."/>
            <person name="Cherry J.M."/>
            <person name="Chung E."/>
            <person name="Duncan M."/>
            <person name="Hunicke-Smith S."/>
            <person name="Hyman R.W."/>
            <person name="Komp C."/>
            <person name="Lashkari D."/>
            <person name="Lew H."/>
            <person name="Lin D."/>
            <person name="Mosedale D."/>
            <person name="Nakahara K."/>
            <person name="Namath A."/>
            <person name="Oefner P."/>
            <person name="Oh C."/>
            <person name="Petel F.X."/>
            <person name="Roberts D."/>
            <person name="Schramm S."/>
            <person name="Schroeder M."/>
            <person name="Shogren T."/>
            <person name="Shroff N."/>
            <person name="Winant A."/>
            <person name="Yelton M.A."/>
            <person name="Botstein D."/>
            <person name="Davis R.W."/>
            <person name="Johnston M."/>
            <person name="Andrews S."/>
            <person name="Brinkman R."/>
            <person name="Cooper J."/>
            <person name="Ding H."/>
            <person name="Du Z."/>
            <person name="Favello A."/>
            <person name="Fulton L."/>
            <person name="Gattung S."/>
            <person name="Greco T."/>
            <person name="Hallsworth K."/>
            <person name="Hawkins J."/>
            <person name="Hillier L.W."/>
            <person name="Jier M."/>
            <person name="Johnson D."/>
            <person name="Johnston L."/>
            <person name="Kirsten J."/>
            <person name="Kucaba T."/>
            <person name="Langston Y."/>
            <person name="Latreille P."/>
            <person name="Le T."/>
            <person name="Mardis E."/>
            <person name="Menezes S."/>
            <person name="Miller N."/>
            <person name="Nhan M."/>
            <person name="Pauley A."/>
            <person name="Peluso D."/>
            <person name="Rifkin L."/>
            <person name="Riles L."/>
            <person name="Taich A."/>
            <person name="Trevaskis E."/>
            <person name="Vignati D."/>
            <person name="Wilcox L."/>
            <person name="Wohldman P."/>
            <person name="Vaudin M."/>
            <person name="Wilson R."/>
            <person name="Waterston R."/>
            <person name="Albermann K."/>
            <person name="Hani J."/>
            <person name="Heumann K."/>
            <person name="Kleine K."/>
            <person name="Mewes H.-W."/>
            <person name="Zollner A."/>
            <person name="Zaccaria P."/>
        </authorList>
    </citation>
    <scope>NUCLEOTIDE SEQUENCE [LARGE SCALE GENOMIC DNA]</scope>
    <source>
        <strain>ATCC 204508 / S288c</strain>
    </source>
</reference>
<reference key="3">
    <citation type="journal article" date="2014" name="G3 (Bethesda)">
        <title>The reference genome sequence of Saccharomyces cerevisiae: Then and now.</title>
        <authorList>
            <person name="Engel S.R."/>
            <person name="Dietrich F.S."/>
            <person name="Fisk D.G."/>
            <person name="Binkley G."/>
            <person name="Balakrishnan R."/>
            <person name="Costanzo M.C."/>
            <person name="Dwight S.S."/>
            <person name="Hitz B.C."/>
            <person name="Karra K."/>
            <person name="Nash R.S."/>
            <person name="Weng S."/>
            <person name="Wong E.D."/>
            <person name="Lloyd P."/>
            <person name="Skrzypek M.S."/>
            <person name="Miyasato S.R."/>
            <person name="Simison M."/>
            <person name="Cherry J.M."/>
        </authorList>
    </citation>
    <scope>GENOME REANNOTATION</scope>
    <source>
        <strain>ATCC 204508 / S288c</strain>
    </source>
</reference>
<reference key="4">
    <citation type="journal article" date="2007" name="Genome Res.">
        <title>Approaching a complete repository of sequence-verified protein-encoding clones for Saccharomyces cerevisiae.</title>
        <authorList>
            <person name="Hu Y."/>
            <person name="Rolfs A."/>
            <person name="Bhullar B."/>
            <person name="Murthy T.V.S."/>
            <person name="Zhu C."/>
            <person name="Berger M.F."/>
            <person name="Camargo A.A."/>
            <person name="Kelley F."/>
            <person name="McCarron S."/>
            <person name="Jepson D."/>
            <person name="Richardson A."/>
            <person name="Raphael J."/>
            <person name="Moreira D."/>
            <person name="Taycher E."/>
            <person name="Zuo D."/>
            <person name="Mohr S."/>
            <person name="Kane M.F."/>
            <person name="Williamson J."/>
            <person name="Simpson A.J.G."/>
            <person name="Bulyk M.L."/>
            <person name="Harlow E."/>
            <person name="Marsischky G."/>
            <person name="Kolodner R.D."/>
            <person name="LaBaer J."/>
        </authorList>
    </citation>
    <scope>NUCLEOTIDE SEQUENCE [GENOMIC DNA]</scope>
    <source>
        <strain>ATCC 204508 / S288c</strain>
    </source>
</reference>
<reference key="5">
    <citation type="journal article" date="1996" name="Genes Dev.">
        <title>Anaphase initiation in Saccharomyces cerevisiae is controlled by the APC-dependent degradation of the anaphase inhibitor Pds1p.</title>
        <authorList>
            <person name="Cohen-Fix O."/>
            <person name="Peters J.M."/>
            <person name="Kirschner M.W."/>
            <person name="Koshland D."/>
        </authorList>
    </citation>
    <scope>UBIQUITINATION</scope>
    <scope>MUTAGENESIS OF 85-ARG--LEU-88</scope>
</reference>
<reference key="6">
    <citation type="journal article" date="1998" name="Cell">
        <title>An ESP1/PDS1 complex regulates loss of sister chromatid cohesion at the metaphase to anaphase transition in yeast.</title>
        <authorList>
            <person name="Ciosk R."/>
            <person name="Zachariae W."/>
            <person name="Michaelis C."/>
            <person name="Shevchenko A."/>
            <person name="Mann M."/>
            <person name="Nasmyth K."/>
        </authorList>
    </citation>
    <scope>FUNCTION</scope>
    <scope>INTERACTION WITH ESP1</scope>
</reference>
<reference key="7">
    <citation type="journal article" date="2001" name="Curr. Biol.">
        <title>The anaphase inhibitor Pds1 binds to the APC/C-associated protein Cdc20 in a destruction box-dependent manner.</title>
        <authorList>
            <person name="Hilioti Z."/>
            <person name="Chung Y.-S."/>
            <person name="Mochizuki Y."/>
            <person name="Hardy C.F.J."/>
            <person name="Cohen-Fix O."/>
        </authorList>
    </citation>
    <scope>INTERACTION WITH CDC20</scope>
</reference>
<reference key="8">
    <citation type="journal article" date="2002" name="Genes Dev.">
        <title>Phosphorylation of the mitotic regulator Pds1/securin by Cdc28 is required for efficient nuclear localization of Esp1/separase.</title>
        <authorList>
            <person name="Agarwal R."/>
            <person name="Cohen-Fix O."/>
        </authorList>
    </citation>
    <scope>PHOSPHORYLATION AT SER-277 AND SER-292 BY CDC28</scope>
    <scope>MUTAGENESIS OF SER-277; SER-292 AND THR-304</scope>
</reference>
<reference key="9">
    <citation type="journal article" date="2007" name="Proc. Natl. Acad. Sci. U.S.A.">
        <title>Analysis of phosphorylation sites on proteins from Saccharomyces cerevisiae by electron transfer dissociation (ETD) mass spectrometry.</title>
        <authorList>
            <person name="Chi A."/>
            <person name="Huttenhower C."/>
            <person name="Geer L.Y."/>
            <person name="Coon J.J."/>
            <person name="Syka J.E.P."/>
            <person name="Bai D.L."/>
            <person name="Shabanowitz J."/>
            <person name="Burke D.J."/>
            <person name="Troyanskaya O.G."/>
            <person name="Hunt D.F."/>
        </authorList>
    </citation>
    <scope>IDENTIFICATION BY MASS SPECTROMETRY [LARGE SCALE ANALYSIS]</scope>
</reference>
<reference key="10">
    <citation type="journal article" date="2008" name="Mol. Cell. Proteomics">
        <title>A multidimensional chromatography technology for in-depth phosphoproteome analysis.</title>
        <authorList>
            <person name="Albuquerque C.P."/>
            <person name="Smolka M.B."/>
            <person name="Payne S.H."/>
            <person name="Bafna V."/>
            <person name="Eng J."/>
            <person name="Zhou H."/>
        </authorList>
    </citation>
    <scope>PHOSPHORYLATION [LARGE SCALE ANALYSIS] AT SER-185; SER-186; SER-212 AND SER-213</scope>
    <scope>IDENTIFICATION BY MASS SPECTROMETRY [LARGE SCALE ANALYSIS]</scope>
</reference>
<reference key="11">
    <citation type="journal article" date="2009" name="Science">
        <title>Global analysis of Cdk1 substrate phosphorylation sites provides insights into evolution.</title>
        <authorList>
            <person name="Holt L.J."/>
            <person name="Tuch B.B."/>
            <person name="Villen J."/>
            <person name="Johnson A.D."/>
            <person name="Gygi S.P."/>
            <person name="Morgan D.O."/>
        </authorList>
    </citation>
    <scope>PHOSPHORYLATION [LARGE SCALE ANALYSIS] AT SER-277</scope>
    <scope>IDENTIFICATION BY MASS SPECTROMETRY [LARGE SCALE ANALYSIS]</scope>
</reference>
<sequence length="373" mass="41838">MMPANEDKENNIVYTGNESSGINFPQTPAHLLKRSHSNILKPPVRLDQLKRDANSNNGNTLKYIQGGKEVSPTKRLHTHAQQQGRLPLAAKDNNRSKSFIFPETSNQSKDADLPQLQNTLSIRKNDQLRKLSQISRSRSRANHNDLLSNSRKLQKYGSVLGYNALPKMKSLVLKDLADSGKNEESSDDDEGNEDSESKLGKKLQSALLKQDSSDGENELNGGLGLFNEQGGLQQLIKNSTKNEQKTKNDKSDKTDDYDIEIAPQRQEPLPYVPEGYSPFQQDDIEKLKTFNSPYKLDLEDEDDTPDKVDLLPLEQIDEEGEKDETECITRNQEEGAALPLLSKNFKEVAAVPTMELVYSEEGLDPEELEDLVT</sequence>
<protein>
    <recommendedName>
        <fullName>Securin</fullName>
    </recommendedName>
</protein>
<comment type="function">
    <text evidence="6">Regulatory protein, which plays a central role in chromosome stability. Probably acts by blocking the action of key proteins. During the mitosis, it blocks Separase/ESP1 function, preventing the proteolysis of the cohesin complex and the subsequent segregation of the chromosomes. At the onset of anaphase, it is ubiquitinated, conducting to its destruction and to the liberation of ESP1.</text>
</comment>
<comment type="subunit">
    <text evidence="3 6">Interacts with the caspase-like ESP1, and prevents its protease activity probably by covering its active site. Interacts with CDC20.</text>
</comment>
<comment type="interaction">
    <interactant intactId="EBI-16908">
        <id>P40316</id>
    </interactant>
    <interactant intactId="EBI-6657">
        <id>Q03018</id>
        <label>ESP1</label>
    </interactant>
    <organismsDiffer>false</organismsDiffer>
    <experiments>2</experiments>
</comment>
<comment type="subcellular location">
    <subcellularLocation>
        <location>Cytoplasm</location>
    </subcellularLocation>
    <subcellularLocation>
        <location>Nucleus</location>
    </subcellularLocation>
</comment>
<comment type="domain">
    <text evidence="1">The N-terminal destruction box (D-box) acts as a recognition signal for degradation via the ubiquitin-proteasome pathway.</text>
</comment>
<comment type="PTM">
    <text evidence="4">Phosphorylated by CDC28. The phosphorylation may be important for ESP1 localization to the nucleus.</text>
</comment>
<comment type="PTM">
    <text evidence="5">Ubiquitinated by the anaphase promoting complex (APC) at the onset of anaphase, conducting to its degradation.</text>
</comment>
<comment type="similarity">
    <text evidence="7">Belongs to the securin family.</text>
</comment>
<gene>
    <name type="primary">PDS1</name>
    <name type="ordered locus">YDR113C</name>
    <name type="ORF">YD9727.08C</name>
</gene>
<dbReference type="EMBL" id="U12185">
    <property type="protein sequence ID" value="AAB00106.1"/>
    <property type="molecule type" value="Genomic_DNA"/>
</dbReference>
<dbReference type="EMBL" id="Z48758">
    <property type="protein sequence ID" value="CAA88666.1"/>
    <property type="molecule type" value="Genomic_DNA"/>
</dbReference>
<dbReference type="EMBL" id="AY558573">
    <property type="protein sequence ID" value="AAS56899.1"/>
    <property type="molecule type" value="Genomic_DNA"/>
</dbReference>
<dbReference type="EMBL" id="BK006938">
    <property type="protein sequence ID" value="DAA11958.1"/>
    <property type="molecule type" value="Genomic_DNA"/>
</dbReference>
<dbReference type="PIR" id="S47911">
    <property type="entry name" value="S47911"/>
</dbReference>
<dbReference type="RefSeq" id="NP_010398.3">
    <property type="nucleotide sequence ID" value="NM_001180421.3"/>
</dbReference>
<dbReference type="PDB" id="5U1S">
    <property type="method" value="X-ray"/>
    <property type="resolution" value="3.00 A"/>
    <property type="chains" value="B=258-373"/>
</dbReference>
<dbReference type="PDB" id="5U1T">
    <property type="method" value="X-ray"/>
    <property type="resolution" value="2.60 A"/>
    <property type="chains" value="B=258-373"/>
</dbReference>
<dbReference type="PDBsum" id="5U1S"/>
<dbReference type="PDBsum" id="5U1T"/>
<dbReference type="SMR" id="P40316"/>
<dbReference type="BioGRID" id="32170">
    <property type="interactions" value="223"/>
</dbReference>
<dbReference type="ComplexPortal" id="CPX-1340">
    <property type="entry name" value="Separase-Securin complex"/>
</dbReference>
<dbReference type="DIP" id="DIP-2798N"/>
<dbReference type="FunCoup" id="P40316">
    <property type="interactions" value="249"/>
</dbReference>
<dbReference type="IntAct" id="P40316">
    <property type="interactions" value="13"/>
</dbReference>
<dbReference type="MINT" id="P40316"/>
<dbReference type="STRING" id="4932.YDR113C"/>
<dbReference type="iPTMnet" id="P40316"/>
<dbReference type="PaxDb" id="4932-YDR113C"/>
<dbReference type="PeptideAtlas" id="P40316"/>
<dbReference type="EnsemblFungi" id="YDR113C_mRNA">
    <property type="protein sequence ID" value="YDR113C"/>
    <property type="gene ID" value="YDR113C"/>
</dbReference>
<dbReference type="GeneID" id="851691"/>
<dbReference type="KEGG" id="sce:YDR113C"/>
<dbReference type="AGR" id="SGD:S000002520"/>
<dbReference type="SGD" id="S000002520">
    <property type="gene designation" value="PDS1"/>
</dbReference>
<dbReference type="VEuPathDB" id="FungiDB:YDR113C"/>
<dbReference type="eggNOG" id="ENOG502S4FI">
    <property type="taxonomic scope" value="Eukaryota"/>
</dbReference>
<dbReference type="HOGENOM" id="CLU_079150_0_0_1"/>
<dbReference type="InParanoid" id="P40316"/>
<dbReference type="OMA" id="DCESANE"/>
<dbReference type="OrthoDB" id="4065086at2759"/>
<dbReference type="BioCyc" id="YEAST:G3O-29713-MONOMER"/>
<dbReference type="BioGRID-ORCS" id="851691">
    <property type="hits" value="8 hits in 10 CRISPR screens"/>
</dbReference>
<dbReference type="CD-CODE" id="876000F7">
    <property type="entry name" value="Centrosome"/>
</dbReference>
<dbReference type="PRO" id="PR:P40316"/>
<dbReference type="Proteomes" id="UP000002311">
    <property type="component" value="Chromosome IV"/>
</dbReference>
<dbReference type="RNAct" id="P40316">
    <property type="molecule type" value="protein"/>
</dbReference>
<dbReference type="GO" id="GO:0005737">
    <property type="term" value="C:cytoplasm"/>
    <property type="evidence" value="ECO:0000314"/>
    <property type="project" value="SGD"/>
</dbReference>
<dbReference type="GO" id="GO:0005634">
    <property type="term" value="C:nucleus"/>
    <property type="evidence" value="ECO:0000314"/>
    <property type="project" value="SGD"/>
</dbReference>
<dbReference type="GO" id="GO:1990520">
    <property type="term" value="C:separase-securin complex"/>
    <property type="evidence" value="ECO:0000353"/>
    <property type="project" value="ComplexPortal"/>
</dbReference>
<dbReference type="GO" id="GO:0005819">
    <property type="term" value="C:spindle"/>
    <property type="evidence" value="ECO:0000314"/>
    <property type="project" value="SGD"/>
</dbReference>
<dbReference type="GO" id="GO:0019899">
    <property type="term" value="F:enzyme binding"/>
    <property type="evidence" value="ECO:0000353"/>
    <property type="project" value="SGD"/>
</dbReference>
<dbReference type="GO" id="GO:0051301">
    <property type="term" value="P:cell division"/>
    <property type="evidence" value="ECO:0007669"/>
    <property type="project" value="UniProtKB-KW"/>
</dbReference>
<dbReference type="GO" id="GO:0006974">
    <property type="term" value="P:DNA damage response"/>
    <property type="evidence" value="ECO:0000316"/>
    <property type="project" value="SGD"/>
</dbReference>
<dbReference type="GO" id="GO:0007127">
    <property type="term" value="P:meiosis I"/>
    <property type="evidence" value="ECO:0000315"/>
    <property type="project" value="SGD"/>
</dbReference>
<dbReference type="GO" id="GO:0000070">
    <property type="term" value="P:mitotic sister chromatid segregation"/>
    <property type="evidence" value="ECO:0000315"/>
    <property type="project" value="SGD"/>
</dbReference>
<dbReference type="GO" id="GO:0001100">
    <property type="term" value="P:negative regulation of exit from mitosis"/>
    <property type="evidence" value="ECO:0000315"/>
    <property type="project" value="SGD"/>
</dbReference>
<dbReference type="GO" id="GO:1902104">
    <property type="term" value="P:positive regulation of metaphase/anaphase transition of meiotic cell cycle"/>
    <property type="evidence" value="ECO:0000314"/>
    <property type="project" value="ComplexPortal"/>
</dbReference>
<dbReference type="GO" id="GO:0008104">
    <property type="term" value="P:protein localization"/>
    <property type="evidence" value="ECO:0000315"/>
    <property type="project" value="SGD"/>
</dbReference>
<dbReference type="GO" id="GO:0000725">
    <property type="term" value="P:recombinational repair"/>
    <property type="evidence" value="ECO:0000315"/>
    <property type="project" value="SGD"/>
</dbReference>
<dbReference type="DisProt" id="DP00256"/>
<dbReference type="InterPro" id="IPR006940">
    <property type="entry name" value="Securin_separation_inhibitor"/>
</dbReference>
<dbReference type="Pfam" id="PF04856">
    <property type="entry name" value="Securin"/>
    <property type="match status" value="1"/>
</dbReference>
<accession>P40316</accession>
<accession>D6VS98</accession>
<evidence type="ECO:0000250" key="1"/>
<evidence type="ECO:0000256" key="2">
    <source>
        <dbReference type="SAM" id="MobiDB-lite"/>
    </source>
</evidence>
<evidence type="ECO:0000269" key="3">
    <source>
    </source>
</evidence>
<evidence type="ECO:0000269" key="4">
    <source>
    </source>
</evidence>
<evidence type="ECO:0000269" key="5">
    <source>
    </source>
</evidence>
<evidence type="ECO:0000269" key="6">
    <source>
    </source>
</evidence>
<evidence type="ECO:0000305" key="7"/>
<evidence type="ECO:0000305" key="8">
    <source>
    </source>
</evidence>
<evidence type="ECO:0007744" key="9">
    <source>
    </source>
</evidence>
<evidence type="ECO:0007744" key="10">
    <source>
    </source>
</evidence>
<evidence type="ECO:0007829" key="11">
    <source>
        <dbReference type="PDB" id="5U1T"/>
    </source>
</evidence>
<keyword id="KW-0002">3D-structure</keyword>
<keyword id="KW-0131">Cell cycle</keyword>
<keyword id="KW-0132">Cell division</keyword>
<keyword id="KW-0159">Chromosome partition</keyword>
<keyword id="KW-0963">Cytoplasm</keyword>
<keyword id="KW-0498">Mitosis</keyword>
<keyword id="KW-0539">Nucleus</keyword>
<keyword id="KW-0597">Phosphoprotein</keyword>
<keyword id="KW-1185">Reference proteome</keyword>
<keyword id="KW-0832">Ubl conjugation</keyword>